<proteinExistence type="inferred from homology"/>
<sequence length="238" mass="26320">MGRKWNNIKEKKAQKDKNTSRIYAKFGKEIYVAAKSGEPNPESNQALRLVLERAKTYSVPNHIIEKAIDKAKGAGDENFDHLRYEGFGPSGSMLIVDALTNNVNRTASDVRAAFGKNGGNMGVSGSVAYMFDHVATFGIEGKSVDEILETLMEQDVDVNDVIDDNGLTIVYAEPDQFAVVQDALRAAGVEEFKVAEFEMLPQTDIELSEADQVTFEKLIDALEDLEDVQNVFHNVDLK</sequence>
<name>Y631_STAAW</name>
<dbReference type="EMBL" id="BA000033">
    <property type="protein sequence ID" value="BAB94496.1"/>
    <property type="molecule type" value="Genomic_DNA"/>
</dbReference>
<dbReference type="RefSeq" id="WP_000532966.1">
    <property type="nucleotide sequence ID" value="NC_003923.1"/>
</dbReference>
<dbReference type="SMR" id="P67183"/>
<dbReference type="KEGG" id="sam:MW0631"/>
<dbReference type="HOGENOM" id="CLU_062974_2_0_9"/>
<dbReference type="GO" id="GO:0005829">
    <property type="term" value="C:cytosol"/>
    <property type="evidence" value="ECO:0007669"/>
    <property type="project" value="TreeGrafter"/>
</dbReference>
<dbReference type="GO" id="GO:0003677">
    <property type="term" value="F:DNA binding"/>
    <property type="evidence" value="ECO:0007669"/>
    <property type="project" value="UniProtKB-UniRule"/>
</dbReference>
<dbReference type="GO" id="GO:0006355">
    <property type="term" value="P:regulation of DNA-templated transcription"/>
    <property type="evidence" value="ECO:0007669"/>
    <property type="project" value="UniProtKB-UniRule"/>
</dbReference>
<dbReference type="FunFam" id="1.10.10.200:FF:000003">
    <property type="entry name" value="Probable transcriptional regulatory protein YeeN"/>
    <property type="match status" value="1"/>
</dbReference>
<dbReference type="Gene3D" id="1.10.10.200">
    <property type="match status" value="1"/>
</dbReference>
<dbReference type="Gene3D" id="3.30.70.980">
    <property type="match status" value="2"/>
</dbReference>
<dbReference type="HAMAP" id="MF_00693">
    <property type="entry name" value="Transcrip_reg_TACO1"/>
    <property type="match status" value="1"/>
</dbReference>
<dbReference type="HAMAP" id="MF_00918">
    <property type="entry name" value="Transcrip_reg_TACO1_YeeN"/>
    <property type="match status" value="1"/>
</dbReference>
<dbReference type="InterPro" id="IPR017856">
    <property type="entry name" value="Integrase-like_N"/>
</dbReference>
<dbReference type="InterPro" id="IPR048300">
    <property type="entry name" value="TACO1_YebC-like_2nd/3rd_dom"/>
</dbReference>
<dbReference type="InterPro" id="IPR049083">
    <property type="entry name" value="TACO1_YebC_N"/>
</dbReference>
<dbReference type="InterPro" id="IPR002876">
    <property type="entry name" value="Transcrip_reg_TACO1-like"/>
</dbReference>
<dbReference type="InterPro" id="IPR026564">
    <property type="entry name" value="Transcrip_reg_TACO1-like_dom3"/>
</dbReference>
<dbReference type="InterPro" id="IPR026562">
    <property type="entry name" value="Transcrip_reg_TACO1_YeeN"/>
</dbReference>
<dbReference type="InterPro" id="IPR029072">
    <property type="entry name" value="YebC-like"/>
</dbReference>
<dbReference type="NCBIfam" id="NF001030">
    <property type="entry name" value="PRK00110.1"/>
    <property type="match status" value="1"/>
</dbReference>
<dbReference type="NCBIfam" id="NF009044">
    <property type="entry name" value="PRK12378.1"/>
    <property type="match status" value="1"/>
</dbReference>
<dbReference type="NCBIfam" id="TIGR01033">
    <property type="entry name" value="YebC/PmpR family DNA-binding transcriptional regulator"/>
    <property type="match status" value="1"/>
</dbReference>
<dbReference type="PANTHER" id="PTHR12532">
    <property type="entry name" value="TRANSLATIONAL ACTIVATOR OF CYTOCHROME C OXIDASE 1"/>
    <property type="match status" value="1"/>
</dbReference>
<dbReference type="PANTHER" id="PTHR12532:SF0">
    <property type="entry name" value="TRANSLATIONAL ACTIVATOR OF CYTOCHROME C OXIDASE 1"/>
    <property type="match status" value="1"/>
</dbReference>
<dbReference type="Pfam" id="PF20772">
    <property type="entry name" value="TACO1_YebC_N"/>
    <property type="match status" value="1"/>
</dbReference>
<dbReference type="Pfam" id="PF01709">
    <property type="entry name" value="Transcrip_reg"/>
    <property type="match status" value="1"/>
</dbReference>
<dbReference type="SUPFAM" id="SSF75625">
    <property type="entry name" value="YebC-like"/>
    <property type="match status" value="1"/>
</dbReference>
<organism>
    <name type="scientific">Staphylococcus aureus (strain MW2)</name>
    <dbReference type="NCBI Taxonomy" id="196620"/>
    <lineage>
        <taxon>Bacteria</taxon>
        <taxon>Bacillati</taxon>
        <taxon>Bacillota</taxon>
        <taxon>Bacilli</taxon>
        <taxon>Bacillales</taxon>
        <taxon>Staphylococcaceae</taxon>
        <taxon>Staphylococcus</taxon>
    </lineage>
</organism>
<reference key="1">
    <citation type="journal article" date="2002" name="Lancet">
        <title>Genome and virulence determinants of high virulence community-acquired MRSA.</title>
        <authorList>
            <person name="Baba T."/>
            <person name="Takeuchi F."/>
            <person name="Kuroda M."/>
            <person name="Yuzawa H."/>
            <person name="Aoki K."/>
            <person name="Oguchi A."/>
            <person name="Nagai Y."/>
            <person name="Iwama N."/>
            <person name="Asano K."/>
            <person name="Naimi T."/>
            <person name="Kuroda H."/>
            <person name="Cui L."/>
            <person name="Yamamoto K."/>
            <person name="Hiramatsu K."/>
        </authorList>
    </citation>
    <scope>NUCLEOTIDE SEQUENCE [LARGE SCALE GENOMIC DNA]</scope>
    <source>
        <strain>MW2</strain>
    </source>
</reference>
<gene>
    <name type="ordered locus">MW0631</name>
</gene>
<accession>P67183</accession>
<accession>Q8NXR2</accession>
<accession>Q99VV2</accession>
<feature type="chain" id="PRO_0000175896" description="Probable transcriptional regulatory protein MW0631">
    <location>
        <begin position="1"/>
        <end position="238"/>
    </location>
</feature>
<protein>
    <recommendedName>
        <fullName evidence="1">Probable transcriptional regulatory protein MW0631</fullName>
    </recommendedName>
</protein>
<comment type="subcellular location">
    <subcellularLocation>
        <location evidence="1">Cytoplasm</location>
    </subcellularLocation>
</comment>
<comment type="similarity">
    <text evidence="1">Belongs to the TACO1 family. YeeN subfamily.</text>
</comment>
<keyword id="KW-0963">Cytoplasm</keyword>
<keyword id="KW-0238">DNA-binding</keyword>
<keyword id="KW-0804">Transcription</keyword>
<keyword id="KW-0805">Transcription regulation</keyword>
<evidence type="ECO:0000255" key="1">
    <source>
        <dbReference type="HAMAP-Rule" id="MF_00918"/>
    </source>
</evidence>